<reference key="1">
    <citation type="submission" date="2004-11" db="EMBL/GenBank/DDBJ databases">
        <authorList>
            <consortium name="The German cDNA consortium"/>
        </authorList>
    </citation>
    <scope>NUCLEOTIDE SEQUENCE [LARGE SCALE MRNA]</scope>
    <source>
        <tissue>Kidney</tissue>
    </source>
</reference>
<accession>Q5R7C1</accession>
<sequence length="261" mass="29952">MAGPELLLDSNIRLWVVLPIVIITFFVGMIRHYVSILLQSDKKLTQEQVSDSQVLIRSRVLRENGKYIPKQSFLTRKYYFNNPEDGFFKKTKRKVVPPSPMTDPTMLTDMMKGNVTNVLPMILIGGWINMTFSGFVTTKVPFPLTLRFKPMLQQGIELLTLDASWVSSASWYFLNVFGLRSIYSLILGQDNAADQSRMMQEQMTGAAMAMPADTNKAFKTEWEALELTDHQWALDDVEEELMAKDLHFEGMFKKELQTSIF</sequence>
<evidence type="ECO:0000250" key="1">
    <source>
        <dbReference type="UniProtKB" id="Q9P0I2"/>
    </source>
</evidence>
<evidence type="ECO:0000305" key="2"/>
<feature type="initiator methionine" description="Removed" evidence="1">
    <location>
        <position position="1"/>
    </location>
</feature>
<feature type="chain" id="PRO_0000211408" description="ER membrane protein complex subunit 3">
    <location>
        <begin position="2"/>
        <end position="261"/>
    </location>
</feature>
<feature type="topological domain" description="Lumenal" evidence="1">
    <location>
        <begin position="2"/>
        <end position="14"/>
    </location>
</feature>
<feature type="transmembrane region" description="Helical" evidence="1">
    <location>
        <begin position="15"/>
        <end position="38"/>
    </location>
</feature>
<feature type="topological domain" description="Cytoplasmic" evidence="1">
    <location>
        <begin position="39"/>
        <end position="114"/>
    </location>
</feature>
<feature type="transmembrane region" description="Helical" evidence="1">
    <location>
        <begin position="115"/>
        <end position="130"/>
    </location>
</feature>
<feature type="topological domain" description="Lumenal" evidence="1">
    <location>
        <begin position="131"/>
        <end position="168"/>
    </location>
</feature>
<feature type="transmembrane region" description="Helical" evidence="1">
    <location>
        <begin position="169"/>
        <end position="187"/>
    </location>
</feature>
<feature type="topological domain" description="Cytoplasmic" evidence="1">
    <location>
        <begin position="188"/>
        <end position="261"/>
    </location>
</feature>
<protein>
    <recommendedName>
        <fullName>ER membrane protein complex subunit 3</fullName>
    </recommendedName>
    <alternativeName>
        <fullName>Transmembrane protein 111</fullName>
    </alternativeName>
</protein>
<proteinExistence type="evidence at transcript level"/>
<gene>
    <name type="primary">EMC3</name>
    <name type="synonym">TMEM111</name>
</gene>
<dbReference type="EMBL" id="CR860197">
    <property type="protein sequence ID" value="CAH92339.1"/>
    <property type="molecule type" value="mRNA"/>
</dbReference>
<dbReference type="RefSeq" id="NP_001126375.1">
    <property type="nucleotide sequence ID" value="NM_001132903.2"/>
</dbReference>
<dbReference type="SMR" id="Q5R7C1"/>
<dbReference type="FunCoup" id="Q5R7C1">
    <property type="interactions" value="1867"/>
</dbReference>
<dbReference type="STRING" id="9601.ENSPPYP00000015283"/>
<dbReference type="Ensembl" id="ENSPPYT00000037219.1">
    <property type="protein sequence ID" value="ENSPPYP00000038478.1"/>
    <property type="gene ID" value="ENSPPYG00000030149.1"/>
</dbReference>
<dbReference type="GeneID" id="100173356"/>
<dbReference type="KEGG" id="pon:100173356"/>
<dbReference type="CTD" id="55831"/>
<dbReference type="eggNOG" id="KOG3188">
    <property type="taxonomic scope" value="Eukaryota"/>
</dbReference>
<dbReference type="GeneTree" id="ENSGT00390000005780"/>
<dbReference type="HOGENOM" id="CLU_060791_0_0_1"/>
<dbReference type="InParanoid" id="Q5R7C1"/>
<dbReference type="OMA" id="DSINMID"/>
<dbReference type="OrthoDB" id="6745403at2759"/>
<dbReference type="Proteomes" id="UP000001595">
    <property type="component" value="Chromosome 3"/>
</dbReference>
<dbReference type="GO" id="GO:0072546">
    <property type="term" value="C:EMC complex"/>
    <property type="evidence" value="ECO:0000250"/>
    <property type="project" value="UniProtKB"/>
</dbReference>
<dbReference type="GO" id="GO:0005789">
    <property type="term" value="C:endoplasmic reticulum membrane"/>
    <property type="evidence" value="ECO:0000250"/>
    <property type="project" value="UniProtKB"/>
</dbReference>
<dbReference type="GO" id="GO:0016020">
    <property type="term" value="C:membrane"/>
    <property type="evidence" value="ECO:0000250"/>
    <property type="project" value="UniProtKB"/>
</dbReference>
<dbReference type="GO" id="GO:0034975">
    <property type="term" value="P:protein folding in endoplasmic reticulum"/>
    <property type="evidence" value="ECO:0007669"/>
    <property type="project" value="TreeGrafter"/>
</dbReference>
<dbReference type="GO" id="GO:0045050">
    <property type="term" value="P:protein insertion into ER membrane by stop-transfer membrane-anchor sequence"/>
    <property type="evidence" value="ECO:0000250"/>
    <property type="project" value="UniProtKB"/>
</dbReference>
<dbReference type="GO" id="GO:0071816">
    <property type="term" value="P:tail-anchored membrane protein insertion into ER membrane"/>
    <property type="evidence" value="ECO:0000250"/>
    <property type="project" value="UniProtKB"/>
</dbReference>
<dbReference type="InterPro" id="IPR008568">
    <property type="entry name" value="EMC3"/>
</dbReference>
<dbReference type="InterPro" id="IPR002809">
    <property type="entry name" value="EMC3/TMCO1"/>
</dbReference>
<dbReference type="PANTHER" id="PTHR13116">
    <property type="entry name" value="ER MEMBRANE PROTEIN COMPLEX SUBUNIT 3"/>
    <property type="match status" value="1"/>
</dbReference>
<dbReference type="PANTHER" id="PTHR13116:SF10">
    <property type="entry name" value="ER MEMBRANE PROTEIN COMPLEX SUBUNIT 3"/>
    <property type="match status" value="1"/>
</dbReference>
<dbReference type="Pfam" id="PF01956">
    <property type="entry name" value="EMC3_TMCO1"/>
    <property type="match status" value="1"/>
</dbReference>
<dbReference type="PIRSF" id="PIRSF010045">
    <property type="entry name" value="DUF850_TM_euk"/>
    <property type="match status" value="1"/>
</dbReference>
<dbReference type="SMART" id="SM01415">
    <property type="entry name" value="DUF106"/>
    <property type="match status" value="1"/>
</dbReference>
<keyword id="KW-0256">Endoplasmic reticulum</keyword>
<keyword id="KW-0472">Membrane</keyword>
<keyword id="KW-1185">Reference proteome</keyword>
<keyword id="KW-0812">Transmembrane</keyword>
<keyword id="KW-1133">Transmembrane helix</keyword>
<name>EMC3_PONAB</name>
<comment type="function">
    <text evidence="1">Part of the endoplasmic reticulum membrane protein complex (EMC) that enables the energy-independent insertion into endoplasmic reticulum membranes of newly synthesized membrane proteins. Preferentially accommodates proteins with transmembrane domains that are weakly hydrophobic or contain destabilizing features such as charged and aromatic residues. Involved in the cotranslational insertion of multi-pass membrane proteins in which stop-transfer membrane-anchor sequences become ER membrane spanning helices. It is also required for the post-translational insertion of tail-anchored/TA proteins in endoplasmic reticulum membranes. By mediating the proper cotranslational insertion of N-terminal transmembrane domains in an N-exo topology, with translocated N-terminus in the lumen of the ER, controls the topology of multi-pass membrane proteins like the G protein-coupled receptors. By regulating the insertion of various proteins in membranes, it is indirectly involved in many cellular processes.</text>
</comment>
<comment type="subunit">
    <text evidence="1">Component of the ER membrane protein complex (EMC).</text>
</comment>
<comment type="subcellular location">
    <subcellularLocation>
        <location evidence="1">Endoplasmic reticulum membrane</location>
        <topology evidence="1">Multi-pass membrane protein</topology>
    </subcellularLocation>
</comment>
<comment type="similarity">
    <text evidence="2">Belongs to the EMC3 family.</text>
</comment>
<organism>
    <name type="scientific">Pongo abelii</name>
    <name type="common">Sumatran orangutan</name>
    <name type="synonym">Pongo pygmaeus abelii</name>
    <dbReference type="NCBI Taxonomy" id="9601"/>
    <lineage>
        <taxon>Eukaryota</taxon>
        <taxon>Metazoa</taxon>
        <taxon>Chordata</taxon>
        <taxon>Craniata</taxon>
        <taxon>Vertebrata</taxon>
        <taxon>Euteleostomi</taxon>
        <taxon>Mammalia</taxon>
        <taxon>Eutheria</taxon>
        <taxon>Euarchontoglires</taxon>
        <taxon>Primates</taxon>
        <taxon>Haplorrhini</taxon>
        <taxon>Catarrhini</taxon>
        <taxon>Hominidae</taxon>
        <taxon>Pongo</taxon>
    </lineage>
</organism>